<name>LPP21_BOMMO</name>
<organism>
    <name type="scientific">Bombyx mori</name>
    <name type="common">Silk moth</name>
    <dbReference type="NCBI Taxonomy" id="7091"/>
    <lineage>
        <taxon>Eukaryota</taxon>
        <taxon>Metazoa</taxon>
        <taxon>Ecdysozoa</taxon>
        <taxon>Arthropoda</taxon>
        <taxon>Hexapoda</taxon>
        <taxon>Insecta</taxon>
        <taxon>Pterygota</taxon>
        <taxon>Neoptera</taxon>
        <taxon>Endopterygota</taxon>
        <taxon>Lepidoptera</taxon>
        <taxon>Glossata</taxon>
        <taxon>Ditrysia</taxon>
        <taxon>Bombycoidea</taxon>
        <taxon>Bombycidae</taxon>
        <taxon>Bombycinae</taxon>
        <taxon>Bombyx</taxon>
    </lineage>
</organism>
<reference key="1">
    <citation type="journal article" date="1988" name="Biochim. Biophys. Acta">
        <title>Structures and expression of mRNAs coding for major plasma proteins of Bombyx mori.</title>
        <authorList>
            <person name="Sakai N."/>
            <person name="Mori S."/>
            <person name="Izumi S."/>
            <person name="Haino-Fukushima K."/>
            <person name="Ogura T."/>
            <person name="Maekawa H."/>
            <person name="Tomino S."/>
        </authorList>
    </citation>
    <scope>NUCLEOTIDE SEQUENCE [MRNA]</scope>
    <source>
        <strain>Tokai X Asahi</strain>
        <tissue>Fat body</tissue>
    </source>
</reference>
<dbReference type="EMBL" id="X07555">
    <property type="protein sequence ID" value="CAA30436.1"/>
    <property type="molecule type" value="mRNA"/>
</dbReference>
<dbReference type="PIR" id="S01047">
    <property type="entry name" value="S01047"/>
</dbReference>
<dbReference type="RefSeq" id="NP_001095199.1">
    <property type="nucleotide sequence ID" value="NM_001101729.1"/>
</dbReference>
<dbReference type="SMR" id="P09337"/>
<dbReference type="EnsemblMetazoa" id="NM_001101729.1">
    <property type="protein sequence ID" value="NP_001095199.1"/>
    <property type="gene ID" value="GeneID_778471"/>
</dbReference>
<dbReference type="GeneID" id="778471"/>
<dbReference type="KEGG" id="bmor:778471"/>
<dbReference type="CTD" id="778471"/>
<dbReference type="InParanoid" id="P09337"/>
<dbReference type="Proteomes" id="UP000005204">
    <property type="component" value="Unassembled WGS sequence"/>
</dbReference>
<dbReference type="GO" id="GO:0005576">
    <property type="term" value="C:extracellular region"/>
    <property type="evidence" value="ECO:0007669"/>
    <property type="project" value="UniProtKB-SubCell"/>
</dbReference>
<dbReference type="Gene3D" id="2.80.10.50">
    <property type="match status" value="1"/>
</dbReference>
<dbReference type="Gene3D" id="1.10.10.2400">
    <property type="entry name" value="Lepidopteran low molecular weight (30 kD) lipoprotein, N-terminal domain"/>
    <property type="match status" value="1"/>
</dbReference>
<dbReference type="InterPro" id="IPR004943">
    <property type="entry name" value="Lipoprotein_11"/>
</dbReference>
<dbReference type="InterPro" id="IPR042046">
    <property type="entry name" value="Lipoprotein_11_N"/>
</dbReference>
<dbReference type="Pfam" id="PF03260">
    <property type="entry name" value="Lipoprotein_11"/>
    <property type="match status" value="1"/>
</dbReference>
<keyword id="KW-0449">Lipoprotein</keyword>
<keyword id="KW-1185">Reference proteome</keyword>
<keyword id="KW-0964">Secreted</keyword>
<keyword id="KW-0732">Signal</keyword>
<proteinExistence type="evidence at transcript level"/>
<comment type="subcellular location">
    <subcellularLocation>
        <location evidence="1">Secreted</location>
    </subcellularLocation>
</comment>
<comment type="miscellaneous">
    <text evidence="4">This lipoprotein belongs to the group of structurally related '30 kDa proteins' that comprise major protein components of the fifth (and last) instar larvae and of pupae.</text>
</comment>
<comment type="similarity">
    <text evidence="4">Belongs to the 30 kDa lipoprotein family.</text>
</comment>
<evidence type="ECO:0000250" key="1">
    <source>
        <dbReference type="UniProtKB" id="Q00802"/>
    </source>
</evidence>
<evidence type="ECO:0000255" key="2"/>
<evidence type="ECO:0000303" key="3">
    <source>
    </source>
</evidence>
<evidence type="ECO:0000305" key="4"/>
<protein>
    <recommendedName>
        <fullName evidence="3">Low molecular mass lipoprotein PBMHPC-21</fullName>
    </recommendedName>
</protein>
<sequence length="251" mass="28683">MKFVVVFASCVLAVSAGVTEMSAASMSSSNKELEEKLYNSILTGDYDSAVRQSLEYENQGKGSIIQNVVNNLIIDGSRNTMEYCYKLWVGNGQHIVRKYFPYNFRLIMAGNFVKLIYRNYNLALKLGPTLDPANERLAYGDGKEKNSDLISWKSHYLVGEQHSVLQDPPTLSYNQYLKLSSTTDCNTQDRIIFGTNTADTTREQWFLQPTKYENDVLFFIYNREVQRVALKLGRIVDASGDRSGIWTRWMK</sequence>
<feature type="signal peptide" evidence="2">
    <location>
        <begin position="1"/>
        <end position="16"/>
    </location>
</feature>
<feature type="chain" id="PRO_0000021603" description="Low molecular mass lipoprotein PBMHPC-21">
    <location>
        <begin position="17"/>
        <end position="251"/>
    </location>
</feature>
<accession>P09337</accession>